<evidence type="ECO:0000250" key="1">
    <source>
        <dbReference type="UniProtKB" id="Q9CS00"/>
    </source>
</evidence>
<evidence type="ECO:0000255" key="2"/>
<evidence type="ECO:0000256" key="3">
    <source>
        <dbReference type="SAM" id="MobiDB-lite"/>
    </source>
</evidence>
<evidence type="ECO:0000269" key="4">
    <source>
    </source>
</evidence>
<evidence type="ECO:0000269" key="5">
    <source>
    </source>
</evidence>
<evidence type="ECO:0000269" key="6">
    <source>
    </source>
</evidence>
<evidence type="ECO:0000269" key="7">
    <source>
    </source>
</evidence>
<evidence type="ECO:0000269" key="8">
    <source>
    </source>
</evidence>
<evidence type="ECO:0000305" key="9"/>
<evidence type="ECO:0007744" key="10">
    <source>
    </source>
</evidence>
<evidence type="ECO:0007744" key="11">
    <source>
    </source>
</evidence>
<evidence type="ECO:0007744" key="12">
    <source>
    </source>
</evidence>
<gene>
    <name type="primary">CACTIN</name>
    <name type="synonym">C19orf29</name>
</gene>
<keyword id="KW-0002">3D-structure</keyword>
<keyword id="KW-0025">Alternative splicing</keyword>
<keyword id="KW-0175">Coiled coil</keyword>
<keyword id="KW-0963">Cytoplasm</keyword>
<keyword id="KW-0217">Developmental protein</keyword>
<keyword id="KW-0391">Immunity</keyword>
<keyword id="KW-0399">Innate immunity</keyword>
<keyword id="KW-1017">Isopeptide bond</keyword>
<keyword id="KW-0507">mRNA processing</keyword>
<keyword id="KW-0508">mRNA splicing</keyword>
<keyword id="KW-0539">Nucleus</keyword>
<keyword id="KW-0597">Phosphoprotein</keyword>
<keyword id="KW-1267">Proteomics identification</keyword>
<keyword id="KW-1185">Reference proteome</keyword>
<keyword id="KW-0747">Spliceosome</keyword>
<keyword id="KW-0832">Ubl conjugation</keyword>
<dbReference type="EMBL" id="AY917150">
    <property type="protein sequence ID" value="AAX84551.1"/>
    <property type="molecule type" value="mRNA"/>
</dbReference>
<dbReference type="EMBL" id="AC005175">
    <property type="protein sequence ID" value="AAC24305.1"/>
    <property type="status" value="ALT_SEQ"/>
    <property type="molecule type" value="Genomic_DNA"/>
</dbReference>
<dbReference type="EMBL" id="AC005542">
    <property type="protein sequence ID" value="AAC32903.1"/>
    <property type="status" value="ALT_SEQ"/>
    <property type="molecule type" value="Genomic_DNA"/>
</dbReference>
<dbReference type="EMBL" id="AF155102">
    <property type="protein sequence ID" value="AAD42868.1"/>
    <property type="status" value="ALT_FRAME"/>
    <property type="molecule type" value="mRNA"/>
</dbReference>
<dbReference type="EMBL" id="CH471139">
    <property type="protein sequence ID" value="EAW69298.1"/>
    <property type="status" value="ALT_FRAME"/>
    <property type="molecule type" value="Genomic_DNA"/>
</dbReference>
<dbReference type="EMBL" id="BC004262">
    <property type="protein sequence ID" value="AAH04262.1"/>
    <property type="status" value="ALT_INIT"/>
    <property type="molecule type" value="mRNA"/>
</dbReference>
<dbReference type="EMBL" id="BC019848">
    <property type="protein sequence ID" value="AAH19848.1"/>
    <property type="molecule type" value="mRNA"/>
</dbReference>
<dbReference type="CCDS" id="CCDS45920.1">
    <molecule id="Q8WUQ7-1"/>
</dbReference>
<dbReference type="PIR" id="T02672">
    <property type="entry name" value="T02672"/>
</dbReference>
<dbReference type="RefSeq" id="NP_001074012.1">
    <molecule id="Q8WUQ7-1"/>
    <property type="nucleotide sequence ID" value="NM_001080543.2"/>
</dbReference>
<dbReference type="RefSeq" id="NP_067054.1">
    <molecule id="Q8WUQ7-1"/>
    <property type="nucleotide sequence ID" value="NM_021231.2"/>
</dbReference>
<dbReference type="PDB" id="6QDV">
    <property type="method" value="EM"/>
    <property type="resolution" value="3.30 A"/>
    <property type="chains" value="F=637-758"/>
</dbReference>
<dbReference type="PDB" id="7W5A">
    <property type="method" value="EM"/>
    <property type="resolution" value="3.60 A"/>
    <property type="chains" value="Z=1-758"/>
</dbReference>
<dbReference type="PDB" id="7W5B">
    <property type="method" value="EM"/>
    <property type="resolution" value="4.30 A"/>
    <property type="chains" value="Z=1-758"/>
</dbReference>
<dbReference type="PDB" id="8C6J">
    <property type="method" value="EM"/>
    <property type="resolution" value="2.80 A"/>
    <property type="chains" value="F=1-758"/>
</dbReference>
<dbReference type="PDB" id="9FMD">
    <property type="method" value="EM"/>
    <property type="resolution" value="3.30 A"/>
    <property type="chains" value="F=1-758"/>
</dbReference>
<dbReference type="PDBsum" id="6QDV"/>
<dbReference type="PDBsum" id="7W5A"/>
<dbReference type="PDBsum" id="7W5B"/>
<dbReference type="PDBsum" id="8C6J"/>
<dbReference type="PDBsum" id="9FMD"/>
<dbReference type="EMDB" id="EMD-16452"/>
<dbReference type="EMDB" id="EMD-32319"/>
<dbReference type="EMDB" id="EMD-32321"/>
<dbReference type="EMDB" id="EMD-4525"/>
<dbReference type="SMR" id="Q8WUQ7"/>
<dbReference type="BioGRID" id="121836">
    <property type="interactions" value="130"/>
</dbReference>
<dbReference type="CORUM" id="Q8WUQ7"/>
<dbReference type="FunCoup" id="Q8WUQ7">
    <property type="interactions" value="3897"/>
</dbReference>
<dbReference type="IntAct" id="Q8WUQ7">
    <property type="interactions" value="70"/>
</dbReference>
<dbReference type="MINT" id="Q8WUQ7"/>
<dbReference type="STRING" id="9606.ENSP00000415078"/>
<dbReference type="GlyGen" id="Q8WUQ7">
    <property type="glycosylation" value="2 sites, 1 O-linked glycan (1 site)"/>
</dbReference>
<dbReference type="iPTMnet" id="Q8WUQ7"/>
<dbReference type="MetOSite" id="Q8WUQ7"/>
<dbReference type="PhosphoSitePlus" id="Q8WUQ7"/>
<dbReference type="BioMuta" id="CACTIN"/>
<dbReference type="DMDM" id="322510133"/>
<dbReference type="jPOST" id="Q8WUQ7"/>
<dbReference type="MassIVE" id="Q8WUQ7"/>
<dbReference type="PaxDb" id="9606-ENSP00000415078"/>
<dbReference type="PeptideAtlas" id="Q8WUQ7"/>
<dbReference type="ProteomicsDB" id="74701">
    <molecule id="Q8WUQ7-1"/>
</dbReference>
<dbReference type="ProteomicsDB" id="74702">
    <molecule id="Q8WUQ7-2"/>
</dbReference>
<dbReference type="Pumba" id="Q8WUQ7"/>
<dbReference type="Antibodypedia" id="52584">
    <property type="antibodies" value="83 antibodies from 19 providers"/>
</dbReference>
<dbReference type="DNASU" id="58509"/>
<dbReference type="Ensembl" id="ENST00000221899.7">
    <molecule id="Q8WUQ7-1"/>
    <property type="protein sequence ID" value="ENSP00000221899.4"/>
    <property type="gene ID" value="ENSG00000105298.14"/>
</dbReference>
<dbReference type="Ensembl" id="ENST00000248420.9">
    <molecule id="Q8WUQ7-1"/>
    <property type="protein sequence ID" value="ENSP00000248420.5"/>
    <property type="gene ID" value="ENSG00000105298.14"/>
</dbReference>
<dbReference type="Ensembl" id="ENST00000429344.7">
    <molecule id="Q8WUQ7-1"/>
    <property type="protein sequence ID" value="ENSP00000415078.1"/>
    <property type="gene ID" value="ENSG00000105298.14"/>
</dbReference>
<dbReference type="Ensembl" id="ENST00000585942.5">
    <molecule id="Q8WUQ7-1"/>
    <property type="protein sequence ID" value="ENSP00000465751.1"/>
    <property type="gene ID" value="ENSG00000105298.14"/>
</dbReference>
<dbReference type="GeneID" id="58509"/>
<dbReference type="KEGG" id="hsa:58509"/>
<dbReference type="MANE-Select" id="ENST00000429344.7">
    <property type="protein sequence ID" value="ENSP00000415078.1"/>
    <property type="RefSeq nucleotide sequence ID" value="NM_001080543.2"/>
    <property type="RefSeq protein sequence ID" value="NP_001074012.1"/>
</dbReference>
<dbReference type="UCSC" id="uc002lyh.4">
    <molecule id="Q8WUQ7-1"/>
    <property type="organism name" value="human"/>
</dbReference>
<dbReference type="AGR" id="HGNC:29938"/>
<dbReference type="CTD" id="58509"/>
<dbReference type="GeneCards" id="CACTIN"/>
<dbReference type="HGNC" id="HGNC:29938">
    <property type="gene designation" value="CACTIN"/>
</dbReference>
<dbReference type="HPA" id="ENSG00000105298">
    <property type="expression patterns" value="Low tissue specificity"/>
</dbReference>
<dbReference type="MIM" id="618536">
    <property type="type" value="gene"/>
</dbReference>
<dbReference type="neXtProt" id="NX_Q8WUQ7"/>
<dbReference type="OpenTargets" id="ENSG00000105298"/>
<dbReference type="PharmGKB" id="PA134932683"/>
<dbReference type="VEuPathDB" id="HostDB:ENSG00000105298"/>
<dbReference type="eggNOG" id="KOG2370">
    <property type="taxonomic scope" value="Eukaryota"/>
</dbReference>
<dbReference type="GeneTree" id="ENSGT00950000183102"/>
<dbReference type="HOGENOM" id="CLU_011759_0_0_1"/>
<dbReference type="InParanoid" id="Q8WUQ7"/>
<dbReference type="OMA" id="HIDFWND"/>
<dbReference type="OrthoDB" id="265955at2759"/>
<dbReference type="PAN-GO" id="Q8WUQ7">
    <property type="GO annotations" value="4 GO annotations based on evolutionary models"/>
</dbReference>
<dbReference type="PhylomeDB" id="Q8WUQ7"/>
<dbReference type="TreeFam" id="TF300906"/>
<dbReference type="PathwayCommons" id="Q8WUQ7"/>
<dbReference type="Reactome" id="R-HSA-72163">
    <property type="pathway name" value="mRNA Splicing - Major Pathway"/>
</dbReference>
<dbReference type="SignaLink" id="Q8WUQ7"/>
<dbReference type="BioGRID-ORCS" id="58509">
    <property type="hits" value="739 hits in 1163 CRISPR screens"/>
</dbReference>
<dbReference type="ChiTaRS" id="CACTIN">
    <property type="organism name" value="human"/>
</dbReference>
<dbReference type="GeneWiki" id="C19orf29"/>
<dbReference type="GenomeRNAi" id="58509"/>
<dbReference type="Pharos" id="Q8WUQ7">
    <property type="development level" value="Tbio"/>
</dbReference>
<dbReference type="PRO" id="PR:Q8WUQ7"/>
<dbReference type="Proteomes" id="UP000005640">
    <property type="component" value="Chromosome 19"/>
</dbReference>
<dbReference type="RNAct" id="Q8WUQ7">
    <property type="molecule type" value="protein"/>
</dbReference>
<dbReference type="Bgee" id="ENSG00000105298">
    <property type="expression patterns" value="Expressed in sural nerve and 192 other cell types or tissues"/>
</dbReference>
<dbReference type="ExpressionAtlas" id="Q8WUQ7">
    <property type="expression patterns" value="baseline and differential"/>
</dbReference>
<dbReference type="GO" id="GO:0071013">
    <property type="term" value="C:catalytic step 2 spliceosome"/>
    <property type="evidence" value="ECO:0000314"/>
    <property type="project" value="UniProtKB"/>
</dbReference>
<dbReference type="GO" id="GO:0005737">
    <property type="term" value="C:cytoplasm"/>
    <property type="evidence" value="ECO:0000318"/>
    <property type="project" value="GO_Central"/>
</dbReference>
<dbReference type="GO" id="GO:0005829">
    <property type="term" value="C:cytosol"/>
    <property type="evidence" value="ECO:0000314"/>
    <property type="project" value="HPA"/>
</dbReference>
<dbReference type="GO" id="GO:0016607">
    <property type="term" value="C:nuclear speck"/>
    <property type="evidence" value="ECO:0000314"/>
    <property type="project" value="HPA"/>
</dbReference>
<dbReference type="GO" id="GO:0005654">
    <property type="term" value="C:nucleoplasm"/>
    <property type="evidence" value="ECO:0000314"/>
    <property type="project" value="HPA"/>
</dbReference>
<dbReference type="GO" id="GO:0005634">
    <property type="term" value="C:nucleus"/>
    <property type="evidence" value="ECO:0000314"/>
    <property type="project" value="UniProtKB"/>
</dbReference>
<dbReference type="GO" id="GO:0005681">
    <property type="term" value="C:spliceosomal complex"/>
    <property type="evidence" value="ECO:0000318"/>
    <property type="project" value="GO_Central"/>
</dbReference>
<dbReference type="GO" id="GO:0003723">
    <property type="term" value="F:RNA binding"/>
    <property type="evidence" value="ECO:0007005"/>
    <property type="project" value="UniProtKB"/>
</dbReference>
<dbReference type="GO" id="GO:0071347">
    <property type="term" value="P:cellular response to interleukin-1"/>
    <property type="evidence" value="ECO:0000314"/>
    <property type="project" value="UniProtKB"/>
</dbReference>
<dbReference type="GO" id="GO:0071222">
    <property type="term" value="P:cellular response to lipopolysaccharide"/>
    <property type="evidence" value="ECO:0000314"/>
    <property type="project" value="UniProtKB"/>
</dbReference>
<dbReference type="GO" id="GO:0071356">
    <property type="term" value="P:cellular response to tumor necrosis factor"/>
    <property type="evidence" value="ECO:0000314"/>
    <property type="project" value="UniProtKB"/>
</dbReference>
<dbReference type="GO" id="GO:0045087">
    <property type="term" value="P:innate immune response"/>
    <property type="evidence" value="ECO:0007669"/>
    <property type="project" value="UniProtKB-KW"/>
</dbReference>
<dbReference type="GO" id="GO:0045292">
    <property type="term" value="P:mRNA cis splicing, via spliceosome"/>
    <property type="evidence" value="ECO:0000318"/>
    <property type="project" value="GO_Central"/>
</dbReference>
<dbReference type="GO" id="GO:0000398">
    <property type="term" value="P:mRNA splicing, via spliceosome"/>
    <property type="evidence" value="ECO:0000315"/>
    <property type="project" value="UniProtKB"/>
</dbReference>
<dbReference type="GO" id="GO:0043124">
    <property type="term" value="P:negative regulation of canonical NF-kappaB signal transduction"/>
    <property type="evidence" value="ECO:0000314"/>
    <property type="project" value="UniProtKB"/>
</dbReference>
<dbReference type="GO" id="GO:0045824">
    <property type="term" value="P:negative regulation of innate immune response"/>
    <property type="evidence" value="ECO:0000318"/>
    <property type="project" value="GO_Central"/>
</dbReference>
<dbReference type="GO" id="GO:0032688">
    <property type="term" value="P:negative regulation of interferon-beta production"/>
    <property type="evidence" value="ECO:0000315"/>
    <property type="project" value="UniProtKB"/>
</dbReference>
<dbReference type="GO" id="GO:0032717">
    <property type="term" value="P:negative regulation of interleukin-8 production"/>
    <property type="evidence" value="ECO:0000314"/>
    <property type="project" value="UniProtKB"/>
</dbReference>
<dbReference type="GO" id="GO:0031665">
    <property type="term" value="P:negative regulation of lipopolysaccharide-mediated signaling pathway"/>
    <property type="evidence" value="ECO:0000315"/>
    <property type="project" value="UniProtKB"/>
</dbReference>
<dbReference type="GO" id="GO:0032088">
    <property type="term" value="P:negative regulation of NF-kappaB transcription factor activity"/>
    <property type="evidence" value="ECO:0000314"/>
    <property type="project" value="UniProtKB"/>
</dbReference>
<dbReference type="GO" id="GO:0001933">
    <property type="term" value="P:negative regulation of protein phosphorylation"/>
    <property type="evidence" value="ECO:0000315"/>
    <property type="project" value="UniProtKB"/>
</dbReference>
<dbReference type="GO" id="GO:0034122">
    <property type="term" value="P:negative regulation of toll-like receptor signaling pathway"/>
    <property type="evidence" value="ECO:0000314"/>
    <property type="project" value="UniProtKB"/>
</dbReference>
<dbReference type="GO" id="GO:0032720">
    <property type="term" value="P:negative regulation of tumor necrosis factor production"/>
    <property type="evidence" value="ECO:0000314"/>
    <property type="project" value="UniProtKB"/>
</dbReference>
<dbReference type="GO" id="GO:0060339">
    <property type="term" value="P:negative regulation of type I interferon-mediated signaling pathway"/>
    <property type="evidence" value="ECO:0000315"/>
    <property type="project" value="UniProtKB"/>
</dbReference>
<dbReference type="InterPro" id="IPR019134">
    <property type="entry name" value="Cactin_C"/>
</dbReference>
<dbReference type="InterPro" id="IPR018816">
    <property type="entry name" value="Cactin_central"/>
</dbReference>
<dbReference type="PANTHER" id="PTHR21737">
    <property type="entry name" value="POLYGLUTAMINE BINDING PROTEIN 1/MARVEL MEMBRANE-ASSOCIATING DOMAIN CONTAINING 3"/>
    <property type="match status" value="1"/>
</dbReference>
<dbReference type="PANTHER" id="PTHR21737:SF6">
    <property type="entry name" value="SPLICING FACTOR CACTIN"/>
    <property type="match status" value="1"/>
</dbReference>
<dbReference type="Pfam" id="PF10312">
    <property type="entry name" value="Cactin_mid"/>
    <property type="match status" value="1"/>
</dbReference>
<dbReference type="Pfam" id="PF09732">
    <property type="entry name" value="CactinC_cactus"/>
    <property type="match status" value="1"/>
</dbReference>
<dbReference type="SMART" id="SM01050">
    <property type="entry name" value="CactinC_cactus"/>
    <property type="match status" value="1"/>
</dbReference>
<name>CATIN_HUMAN</name>
<feature type="chain" id="PRO_0000231617" description="Splicing factor Cactin">
    <location>
        <begin position="1"/>
        <end position="758"/>
    </location>
</feature>
<feature type="region of interest" description="Disordered" evidence="3">
    <location>
        <begin position="1"/>
        <end position="140"/>
    </location>
</feature>
<feature type="region of interest" description="Disordered" evidence="3">
    <location>
        <begin position="155"/>
        <end position="181"/>
    </location>
</feature>
<feature type="region of interest" description="Disordered" evidence="3">
    <location>
        <begin position="477"/>
        <end position="536"/>
    </location>
</feature>
<feature type="coiled-coil region" evidence="2">
    <location>
        <begin position="135"/>
        <end position="185"/>
    </location>
</feature>
<feature type="coiled-coil region" evidence="2">
    <location>
        <begin position="225"/>
        <end position="277"/>
    </location>
</feature>
<feature type="compositionally biased region" description="Basic residues" evidence="3">
    <location>
        <begin position="8"/>
        <end position="20"/>
    </location>
</feature>
<feature type="compositionally biased region" description="Basic residues" evidence="3">
    <location>
        <begin position="27"/>
        <end position="38"/>
    </location>
</feature>
<feature type="compositionally biased region" description="Basic and acidic residues" evidence="3">
    <location>
        <begin position="55"/>
        <end position="65"/>
    </location>
</feature>
<feature type="compositionally biased region" description="Low complexity" evidence="3">
    <location>
        <begin position="108"/>
        <end position="140"/>
    </location>
</feature>
<feature type="compositionally biased region" description="Basic and acidic residues" evidence="3">
    <location>
        <begin position="155"/>
        <end position="178"/>
    </location>
</feature>
<feature type="compositionally biased region" description="Acidic residues" evidence="3">
    <location>
        <begin position="525"/>
        <end position="536"/>
    </location>
</feature>
<feature type="modified residue" description="Phosphoserine" evidence="1">
    <location>
        <position position="126"/>
    </location>
</feature>
<feature type="modified residue" description="Phosphoserine" evidence="10">
    <location>
        <position position="476"/>
    </location>
</feature>
<feature type="modified residue" description="Phosphotyrosine" evidence="11">
    <location>
        <position position="559"/>
    </location>
</feature>
<feature type="cross-link" description="Glycyl lysine isopeptide (Lys-Gly) (interchain with G-Cter in SUMO2)" evidence="12">
    <location>
        <position position="469"/>
    </location>
</feature>
<feature type="cross-link" description="Glycyl lysine isopeptide (Lys-Gly) (interchain with G-Cter in SUMO2)" evidence="12">
    <location>
        <position position="484"/>
    </location>
</feature>
<feature type="splice variant" id="VSP_017856" description="In isoform 2." evidence="9">
    <original>R</original>
    <variation>RPGPCWRPIRHCRRDPLWTPTLCRDWPPTHPVLAGGVHFPAAGIPPPGLLTGPWSMRPVTPSFAHIRTVAPSHSPFSGQEGRGPHGCHSPGRSGPAGRLVLQHPTGTSPTEAKRKVPPGPPEGHPTSPVTSPRPPTAPPRHPASSGNSSVCFSKKTCRWEKKSFVLMELAYWQDRMFF</variation>
    <location>
        <position position="758"/>
    </location>
</feature>
<feature type="sequence conflict" description="In Ref. 4; AAH19848." evidence="9" ref="4">
    <original>A</original>
    <variation>V</variation>
    <location>
        <position position="499"/>
    </location>
</feature>
<comment type="function">
    <text evidence="5 6 7">Plays a role in pre-mRNA splicing by facilitating excision of a subset of introns (PubMed:28062851). Required for the splicing of CDCA5/Sororin, a regulator of sister chromatid cohesion (PubMed:28062851). Involved in the regulation of innate immune response (PubMed:20829348). Acts as a negative regulator of Toll-like receptor, interferon-regulatory factor (IRF) and canonical NF-kappa-B signaling pathways (PubMed:20829348, PubMed:26363554). Contributes to the regulation of transcriptional activation of NF-kappa-B target genes in response to endogenous pro-inflammatory stimuli (PubMed:20829348, PubMed:26363554).</text>
</comment>
<comment type="subunit">
    <text evidence="4 5 6 7 8">Interacts (via N-terminal domain) with NFKBIL1; the interaction occurs in a pro-inflammatory-independent manner (PubMed:20829348). Does not interact with RELA NF-kappa-B subunit (PubMed:20829348). Identified in the spliceosome C complex (PubMed:11991638). Interacts with SF3B1 (PubMed:34365507). Interacts with SDE2 (PubMed:34365507). Interacts with SRRM2 (PubMed:28062851). Interacts with DHX8 (PubMed:28062851). Interacts with isoform 2 of TRIM39 (via domain B box-type) (PubMed:26363554).</text>
</comment>
<comment type="interaction">
    <interactant intactId="EBI-348479">
        <id>Q8WUQ7</id>
    </interactant>
    <interactant intactId="EBI-750020">
        <id>P49760</id>
        <label>CLK2</label>
    </interactant>
    <organismsDiffer>false</organismsDiffer>
    <experiments>3</experiments>
</comment>
<comment type="subcellular location">
    <subcellularLocation>
        <location evidence="5 6 7">Nucleus</location>
    </subcellularLocation>
    <subcellularLocation>
        <location evidence="6">Cytoplasm</location>
        <location evidence="6">Cytosol</location>
    </subcellularLocation>
    <text evidence="5">Nuclear localization with a speckled expression pattern in some cells. Colocalizes with NFKBIL1 in the nucleus.</text>
</comment>
<comment type="alternative products">
    <event type="alternative splicing"/>
    <isoform>
        <id>Q8WUQ7-1</id>
        <name>1</name>
        <sequence type="displayed"/>
    </isoform>
    <isoform>
        <id>Q8WUQ7-2</id>
        <name>2</name>
        <sequence type="described" ref="VSP_017856"/>
    </isoform>
</comment>
<comment type="induction">
    <text evidence="6">Up-regulated by TNF-alpha/TNFA (at protein level).</text>
</comment>
<comment type="miscellaneous">
    <text>Antigen recognized by autologous antibody in patients with renal-cell carcinoma.</text>
</comment>
<comment type="miscellaneous">
    <molecule>Isoform 1</molecule>
    <text>May be produced at very low levels due to a premature stop codon in the mRNA, leading to nonsense-mediated mRNA decay.</text>
</comment>
<comment type="similarity">
    <text evidence="9">Belongs to the CACTIN family.</text>
</comment>
<comment type="caution">
    <text evidence="9">An ORF (C19orf029 OS) has been described in the opposite strand of the C-terminus of this gene.</text>
</comment>
<comment type="sequence caution" evidence="9">
    <conflict type="erroneous gene model prediction">
        <sequence resource="EMBL-CDS" id="AAC24305"/>
    </conflict>
</comment>
<comment type="sequence caution" evidence="9">
    <conflict type="erroneous gene model prediction">
        <sequence resource="EMBL-CDS" id="AAC32903"/>
    </conflict>
</comment>
<comment type="sequence caution" evidence="9">
    <conflict type="frameshift">
        <sequence resource="EMBL-CDS" id="AAD42868"/>
    </conflict>
</comment>
<comment type="sequence caution" evidence="9">
    <conflict type="erroneous initiation">
        <sequence resource="EMBL-CDS" id="AAH04262"/>
    </conflict>
    <text>Truncated N-terminus.</text>
</comment>
<comment type="sequence caution" evidence="9">
    <conflict type="erroneous gene model prediction">
        <sequence resource="EMBL-CDS" id="EAW69298"/>
    </conflict>
</comment>
<protein>
    <recommendedName>
        <fullName evidence="9">Splicing factor Cactin</fullName>
    </recommendedName>
    <alternativeName>
        <fullName>Renal carcinoma antigen NY-REN-24</fullName>
    </alternativeName>
</protein>
<accession>Q8WUQ7</accession>
<accession>A6NNA9</accession>
<accession>A9UL12</accession>
<accession>O75229</accession>
<accession>Q7LE08</accession>
<accession>Q9BTA6</accession>
<accession>Q9Y5A4</accession>
<sequence length="758" mass="88702">MGRDTRSRSRSAGRRGRRRQSQSGSRSRSRSHGRRNRRRREDEGRRRRRRRSRERRSDSEEERWQRSGMRSRSPPRPKWHSRDGSSQSDSGEEQSRGQWARRRRRARSWSPSSSASSSASPGRSQSPRAAAAALSQQQSLQERLRLREERKQQEELMKAFETPEEKRARRLAKKEAKERKKREKMGWGEEYMGYTNTDNPFGDNNLLGTFIWNKALEKKGISHLEEKELKERNKRIQEDNRLELQKVKQLRLEREREKAMREQELEMLQREKEAEHFKTWEEQEDNFHLQQAKLRSKIRIRDGRAKPIDLLAKYISAEDDDLAVEMHEPYTFLNGLTVADMEDLLEDIQVYMELEQGKNADFWRDMTTITEDEISKLRKLEASGKGPGERREGVNASVSSDVQSVFKGKTYNQLQVIFQGIEGKIRAGGPNLDMGYWESLLQQLRAHMARARLRERHQDVLRQKLYKLKQEQGVESEPLFPILKQEPQSPSRSLEPEDAAPTPPGPSSEGGPAEAEVDGATPTEGDGDGDGEGEGEGEAVLMEEDLIQQSLDDYDAGRYSPRLLTAHELPLDAHVLEPDEDLQRLQLSRQQLQVTGDASESAEDIFFRRAKEGMGQDEAQFSVEMPLTGKAYLWADKYRPRKPRFFNRVHTGFEWNKYNQTHYDFDNPPPKIVQGYKFNIFYPDLIDKRSTPEYFLEACADNKDFAILRFHAGPPYEDIAFKIVNREWEYSHRHGFRCQFANGIFQLWFHFKRYRYRR</sequence>
<organism>
    <name type="scientific">Homo sapiens</name>
    <name type="common">Human</name>
    <dbReference type="NCBI Taxonomy" id="9606"/>
    <lineage>
        <taxon>Eukaryota</taxon>
        <taxon>Metazoa</taxon>
        <taxon>Chordata</taxon>
        <taxon>Craniata</taxon>
        <taxon>Vertebrata</taxon>
        <taxon>Euteleostomi</taxon>
        <taxon>Mammalia</taxon>
        <taxon>Eutheria</taxon>
        <taxon>Euarchontoglires</taxon>
        <taxon>Primates</taxon>
        <taxon>Haplorrhini</taxon>
        <taxon>Catarrhini</taxon>
        <taxon>Hominidae</taxon>
        <taxon>Homo</taxon>
    </lineage>
</organism>
<reference key="1">
    <citation type="submission" date="2005-02" db="EMBL/GenBank/DDBJ databases">
        <authorList>
            <person name="Cai Y."/>
            <person name="Yan Y."/>
        </authorList>
    </citation>
    <scope>NUCLEOTIDE SEQUENCE [MRNA] (ISOFORM 1)</scope>
</reference>
<reference key="2">
    <citation type="journal article" date="2004" name="Nature">
        <title>The DNA sequence and biology of human chromosome 19.</title>
        <authorList>
            <person name="Grimwood J."/>
            <person name="Gordon L.A."/>
            <person name="Olsen A.S."/>
            <person name="Terry A."/>
            <person name="Schmutz J."/>
            <person name="Lamerdin J.E."/>
            <person name="Hellsten U."/>
            <person name="Goodstein D."/>
            <person name="Couronne O."/>
            <person name="Tran-Gyamfi M."/>
            <person name="Aerts A."/>
            <person name="Altherr M."/>
            <person name="Ashworth L."/>
            <person name="Bajorek E."/>
            <person name="Black S."/>
            <person name="Branscomb E."/>
            <person name="Caenepeel S."/>
            <person name="Carrano A.V."/>
            <person name="Caoile C."/>
            <person name="Chan Y.M."/>
            <person name="Christensen M."/>
            <person name="Cleland C.A."/>
            <person name="Copeland A."/>
            <person name="Dalin E."/>
            <person name="Dehal P."/>
            <person name="Denys M."/>
            <person name="Detter J.C."/>
            <person name="Escobar J."/>
            <person name="Flowers D."/>
            <person name="Fotopulos D."/>
            <person name="Garcia C."/>
            <person name="Georgescu A.M."/>
            <person name="Glavina T."/>
            <person name="Gomez M."/>
            <person name="Gonzales E."/>
            <person name="Groza M."/>
            <person name="Hammon N."/>
            <person name="Hawkins T."/>
            <person name="Haydu L."/>
            <person name="Ho I."/>
            <person name="Huang W."/>
            <person name="Israni S."/>
            <person name="Jett J."/>
            <person name="Kadner K."/>
            <person name="Kimball H."/>
            <person name="Kobayashi A."/>
            <person name="Larionov V."/>
            <person name="Leem S.-H."/>
            <person name="Lopez F."/>
            <person name="Lou Y."/>
            <person name="Lowry S."/>
            <person name="Malfatti S."/>
            <person name="Martinez D."/>
            <person name="McCready P.M."/>
            <person name="Medina C."/>
            <person name="Morgan J."/>
            <person name="Nelson K."/>
            <person name="Nolan M."/>
            <person name="Ovcharenko I."/>
            <person name="Pitluck S."/>
            <person name="Pollard M."/>
            <person name="Popkie A.P."/>
            <person name="Predki P."/>
            <person name="Quan G."/>
            <person name="Ramirez L."/>
            <person name="Rash S."/>
            <person name="Retterer J."/>
            <person name="Rodriguez A."/>
            <person name="Rogers S."/>
            <person name="Salamov A."/>
            <person name="Salazar A."/>
            <person name="She X."/>
            <person name="Smith D."/>
            <person name="Slezak T."/>
            <person name="Solovyev V."/>
            <person name="Thayer N."/>
            <person name="Tice H."/>
            <person name="Tsai M."/>
            <person name="Ustaszewska A."/>
            <person name="Vo N."/>
            <person name="Wagner M."/>
            <person name="Wheeler J."/>
            <person name="Wu K."/>
            <person name="Xie G."/>
            <person name="Yang J."/>
            <person name="Dubchak I."/>
            <person name="Furey T.S."/>
            <person name="DeJong P."/>
            <person name="Dickson M."/>
            <person name="Gordon D."/>
            <person name="Eichler E.E."/>
            <person name="Pennacchio L.A."/>
            <person name="Richardson P."/>
            <person name="Stubbs L."/>
            <person name="Rokhsar D.S."/>
            <person name="Myers R.M."/>
            <person name="Rubin E.M."/>
            <person name="Lucas S.M."/>
        </authorList>
    </citation>
    <scope>NUCLEOTIDE SEQUENCE [LARGE SCALE GENOMIC DNA] OF 123-758</scope>
</reference>
<reference key="3">
    <citation type="submission" date="2005-09" db="EMBL/GenBank/DDBJ databases">
        <authorList>
            <person name="Mural R.J."/>
            <person name="Istrail S."/>
            <person name="Sutton G.G."/>
            <person name="Florea L."/>
            <person name="Halpern A.L."/>
            <person name="Mobarry C.M."/>
            <person name="Lippert R."/>
            <person name="Walenz B."/>
            <person name="Shatkay H."/>
            <person name="Dew I."/>
            <person name="Miller J.R."/>
            <person name="Flanigan M.J."/>
            <person name="Edwards N.J."/>
            <person name="Bolanos R."/>
            <person name="Fasulo D."/>
            <person name="Halldorsson B.V."/>
            <person name="Hannenhalli S."/>
            <person name="Turner R."/>
            <person name="Yooseph S."/>
            <person name="Lu F."/>
            <person name="Nusskern D.R."/>
            <person name="Shue B.C."/>
            <person name="Zheng X.H."/>
            <person name="Zhong F."/>
            <person name="Delcher A.L."/>
            <person name="Huson D.H."/>
            <person name="Kravitz S.A."/>
            <person name="Mouchard L."/>
            <person name="Reinert K."/>
            <person name="Remington K.A."/>
            <person name="Clark A.G."/>
            <person name="Waterman M.S."/>
            <person name="Eichler E.E."/>
            <person name="Adams M.D."/>
            <person name="Hunkapiller M.W."/>
            <person name="Myers E.W."/>
            <person name="Venter J.C."/>
        </authorList>
    </citation>
    <scope>NUCLEOTIDE SEQUENCE [LARGE SCALE GENOMIC DNA] OF 69-758</scope>
</reference>
<reference key="4">
    <citation type="journal article" date="2004" name="Genome Res.">
        <title>The status, quality, and expansion of the NIH full-length cDNA project: the Mammalian Gene Collection (MGC).</title>
        <authorList>
            <consortium name="The MGC Project Team"/>
        </authorList>
    </citation>
    <scope>NUCLEOTIDE SEQUENCE [LARGE SCALE MRNA] OF 469-758 (ISOFORM 1)</scope>
    <source>
        <tissue>Cervix</tissue>
        <tissue>Uterus</tissue>
    </source>
</reference>
<reference key="5">
    <citation type="journal article" date="1999" name="Int. J. Cancer">
        <title>Antigens recognized by autologous antibody in patients with renal-cell carcinoma.</title>
        <authorList>
            <person name="Scanlan M.J."/>
            <person name="Gordan J.D."/>
            <person name="Williamson B."/>
            <person name="Stockert E."/>
            <person name="Bander N.H."/>
            <person name="Jongeneel C.V."/>
            <person name="Gure A.O."/>
            <person name="Jaeger D."/>
            <person name="Jaeger E."/>
            <person name="Knuth A."/>
            <person name="Chen Y.-T."/>
            <person name="Old L.J."/>
        </authorList>
    </citation>
    <scope>NUCLEOTIDE SEQUENCE [MRNA] OF 534-758 (ISOFORM 1)</scope>
    <scope>IDENTIFICATION AS A RENAL CANCER ANTIGEN</scope>
    <source>
        <tissue>Renal cell carcinoma</tissue>
    </source>
</reference>
<reference key="6">
    <citation type="journal article" date="2002" name="RNA">
        <title>Purification and characterization of native spliceosomes suitable for three-dimensional structural analysis.</title>
        <authorList>
            <person name="Jurica M.S."/>
            <person name="Licklider L.J."/>
            <person name="Gygi S.P."/>
            <person name="Grigorieff N."/>
            <person name="Moore M.J."/>
        </authorList>
    </citation>
    <scope>IDENTIFICATION BY MASS SPECTROMETRY</scope>
    <scope>IDENTIFICATION IN THE SPLICEOSOMAL C COMPLEX</scope>
</reference>
<reference key="7">
    <citation type="journal article" date="2010" name="J. Biol. Chem.">
        <title>Cactin targets the MHC class III protein IkappaB-like (IkappaBL) and inhibits NF-kappaB and interferon-regulatory factor signaling pathways.</title>
        <authorList>
            <person name="Atzei P."/>
            <person name="Gargan S."/>
            <person name="Curran N."/>
            <person name="Moynagh P.N."/>
        </authorList>
    </citation>
    <scope>FUNCTION</scope>
    <scope>INTERACTION WITH NFKBIL1</scope>
    <scope>SUBCELLULAR LOCATION</scope>
</reference>
<reference key="8">
    <citation type="journal article" date="2013" name="J. Proteome Res.">
        <title>Toward a comprehensive characterization of a human cancer cell phosphoproteome.</title>
        <authorList>
            <person name="Zhou H."/>
            <person name="Di Palma S."/>
            <person name="Preisinger C."/>
            <person name="Peng M."/>
            <person name="Polat A.N."/>
            <person name="Heck A.J."/>
            <person name="Mohammed S."/>
        </authorList>
    </citation>
    <scope>PHOSPHORYLATION [LARGE SCALE ANALYSIS] AT SER-476</scope>
    <scope>IDENTIFICATION BY MASS SPECTROMETRY [LARGE SCALE ANALYSIS]</scope>
    <source>
        <tissue>Cervix carcinoma</tissue>
        <tissue>Erythroleukemia</tissue>
    </source>
</reference>
<reference key="9">
    <citation type="journal article" date="2014" name="J. Proteomics">
        <title>An enzyme assisted RP-RPLC approach for in-depth analysis of human liver phosphoproteome.</title>
        <authorList>
            <person name="Bian Y."/>
            <person name="Song C."/>
            <person name="Cheng K."/>
            <person name="Dong M."/>
            <person name="Wang F."/>
            <person name="Huang J."/>
            <person name="Sun D."/>
            <person name="Wang L."/>
            <person name="Ye M."/>
            <person name="Zou H."/>
        </authorList>
    </citation>
    <scope>PHOSPHORYLATION [LARGE SCALE ANALYSIS] AT TYR-559</scope>
    <scope>IDENTIFICATION BY MASS SPECTROMETRY [LARGE SCALE ANALYSIS]</scope>
    <source>
        <tissue>Liver</tissue>
    </source>
</reference>
<reference key="10">
    <citation type="journal article" date="2016" name="Cell. Mol. Life Sci.">
        <title>TRIM39 negatively regulates the NFkappaB-mediated signaling pathway through stabilization of Cactin.</title>
        <authorList>
            <person name="Suzuki M."/>
            <person name="Watanabe M."/>
            <person name="Nakamaru Y."/>
            <person name="Takagi D."/>
            <person name="Takahashi H."/>
            <person name="Fukuda S."/>
            <person name="Hatakeyama S."/>
        </authorList>
    </citation>
    <scope>FUNCTION</scope>
    <scope>SUBCELLULAR LOCATION</scope>
    <scope>INDUCTION BY TNFA</scope>
    <scope>INTERACTION WITH TRIM39</scope>
</reference>
<reference key="11">
    <citation type="journal article" date="2017" name="J. Cell Sci.">
        <title>Human cactin interacts with DHX8 and SRRM2 to assure efficient pre-mRNA splicing and sister chromatid cohesion.</title>
        <authorList>
            <person name="Zanini I.M."/>
            <person name="Soneson C."/>
            <person name="Lorenzi L.E."/>
            <person name="Azzalin C.M."/>
        </authorList>
    </citation>
    <scope>FUNCTION</scope>
    <scope>INTERACTION WITH SRRM2 AND DHX8</scope>
    <scope>SUBCELLULAR LOCATION</scope>
</reference>
<reference key="12">
    <citation type="journal article" date="2017" name="Nat. Struct. Mol. Biol.">
        <title>Site-specific mapping of the human SUMO proteome reveals co-modification with phosphorylation.</title>
        <authorList>
            <person name="Hendriks I.A."/>
            <person name="Lyon D."/>
            <person name="Young C."/>
            <person name="Jensen L.J."/>
            <person name="Vertegaal A.C."/>
            <person name="Nielsen M.L."/>
        </authorList>
    </citation>
    <scope>SUMOYLATION [LARGE SCALE ANALYSIS] AT LYS-469 AND LYS-484</scope>
    <scope>IDENTIFICATION BY MASS SPECTROMETRY [LARGE SCALE ANALYSIS]</scope>
</reference>
<reference key="13">
    <citation type="journal article" date="2021" name="Nucleic Acids Res.">
        <title>SDE2 is an essential gene required for ribosome biogenesis and the regulation of alternative splicing.</title>
        <authorList>
            <person name="Floro J."/>
            <person name="Dai A."/>
            <person name="Metzger A."/>
            <person name="Mora-Martin A."/>
            <person name="Ganem N.J."/>
            <person name="Cifuentes D."/>
            <person name="Wu C.S."/>
            <person name="Dalal J."/>
            <person name="Lyons S.M."/>
            <person name="Labadorf A."/>
            <person name="Flynn R.L."/>
        </authorList>
    </citation>
    <scope>INTERACTION WITH SDE2 AND SF3B1</scope>
</reference>
<proteinExistence type="evidence at protein level"/>